<protein>
    <recommendedName>
        <fullName>Beta-galactosidase</fullName>
        <shortName>Beta-gal</shortName>
        <ecNumber>3.2.1.23</ecNumber>
    </recommendedName>
    <alternativeName>
        <fullName>Lactase</fullName>
    </alternativeName>
</protein>
<proteinExistence type="inferred from homology"/>
<sequence>MLKQQFHENLEVQHVNLLPRRAFYIPYQQGEADYHFETRYNTRNATLLNGEWYFQYFESLEAYLNHSNKQESKTLTVPSVWNLYGYDQIQYLNTQYPIPFNPPYVPKDNPCGHYTRKFTIDEYDQQYDYHLNFEGVDSAFYVWINNEFIGYSQISHAISEFDISNFVKQGENNIEVLVLKYSDGTYLEDQDMFRHSGIFRDVYILKRATERVDDFKVETNLSDDLNAAQIDVKIERAHNLKSVEFQLYNPKGEEVASISGVNEHQFDVHNPHLWSTENPVLYTLYILTDQEVITQKVGIREVAIQNNQFYINGQSIKIRGTNYHDSHPETGYVMTESHFKKDLELMKQGNFNAIRTAHYPKSPLFYEMTDQYGFYVMSEADIETHGVVRLYGEDNNEDFNIIADDSKFETAIIERIEASIMPLKNYSSIVSWSLGNESGFGKNMVKGAARAKSLDNTRPIHYEGTLYRDKQQHYDLSNIDMISRMYPSPEEIEETYLSNPDLDKPFILCEYAHAMGNSPGDLHAYQTLVEQYDSFIGGFVWEWCDHAIQTGMKDGNPIFRYGGDFGEKLHDGNFCVDGIVFPNRVPHEGYYEFKQEHRPLNLVSQEDFKIVLRNQLDFIPAEKYMFVEATVTNLNGGKTISEIPLSNFLPHTAQTIDLSDYINIQHISDVILRYKLKYDDIFRHENFELGHDQIVYQRRTLKEQNEQSDETEILVTQTDKLIKVSVGKSETYVFNKDNASLESVLKHNHIVISQNTTNNIWRAPTDNDTNIKNDWAYSGYKDITTRVHDYQIVENETEVSLIFNIAMVNDAVPPVLFGTVTWHVQRNGTLNVTYDLERDMKAPYLPRFGLGLTLPKAFEQVKYYGKGPFSSYQDKGVANYLDDFGTTVTDNGEIHIRPQETGSHNETTFVEISDGCKKVIVTSDNTFSFNTTHYSLKQLTETTHKDALEPEDQTYLYIDYAQSGIGSNSCGPELNEAYRLNNRHIEFSFNLKFV</sequence>
<feature type="chain" id="PRO_0000057675" description="Beta-galactosidase">
    <location>
        <begin position="1"/>
        <end position="994"/>
    </location>
</feature>
<feature type="active site" description="Proton donor" evidence="1">
    <location>
        <position position="437"/>
    </location>
</feature>
<feature type="active site" description="Nucleophile" evidence="1">
    <location>
        <position position="510"/>
    </location>
</feature>
<keyword id="KW-0326">Glycosidase</keyword>
<keyword id="KW-0378">Hydrolase</keyword>
<name>BGAL_STAXY</name>
<evidence type="ECO:0000250" key="1"/>
<evidence type="ECO:0000305" key="2"/>
<reference key="1">
    <citation type="journal article" date="1998" name="J. Bacteriol.">
        <title>Regulation of lactose utilization genes in Staphylococcus xylosus.</title>
        <authorList>
            <person name="Bassias J."/>
            <person name="Brueckner R."/>
        </authorList>
    </citation>
    <scope>NUCLEOTIDE SEQUENCE [GENOMIC DNA]</scope>
    <source>
        <strain>DSM 20267 / Isolate C2A</strain>
    </source>
</reference>
<accession>O33815</accession>
<gene>
    <name type="primary">lacZ</name>
    <name type="synonym">lacH</name>
</gene>
<comment type="catalytic activity">
    <reaction>
        <text>Hydrolysis of terminal non-reducing beta-D-galactose residues in beta-D-galactosides.</text>
        <dbReference type="EC" id="3.2.1.23"/>
    </reaction>
</comment>
<comment type="similarity">
    <text evidence="2">Belongs to the glycosyl hydrolase 2 family.</text>
</comment>
<dbReference type="EC" id="3.2.1.23"/>
<dbReference type="EMBL" id="Y14599">
    <property type="protein sequence ID" value="CAA74937.1"/>
    <property type="molecule type" value="Genomic_DNA"/>
</dbReference>
<dbReference type="RefSeq" id="WP_047171676.1">
    <property type="nucleotide sequence ID" value="NZ_LN554884.1"/>
</dbReference>
<dbReference type="SMR" id="O33815"/>
<dbReference type="STRING" id="1288.AWC37_11775"/>
<dbReference type="CAZy" id="GH2">
    <property type="family name" value="Glycoside Hydrolase Family 2"/>
</dbReference>
<dbReference type="KEGG" id="sxo:SXYL_00084"/>
<dbReference type="eggNOG" id="COG3250">
    <property type="taxonomic scope" value="Bacteria"/>
</dbReference>
<dbReference type="GO" id="GO:0009341">
    <property type="term" value="C:beta-galactosidase complex"/>
    <property type="evidence" value="ECO:0007669"/>
    <property type="project" value="InterPro"/>
</dbReference>
<dbReference type="GO" id="GO:0004565">
    <property type="term" value="F:beta-galactosidase activity"/>
    <property type="evidence" value="ECO:0007669"/>
    <property type="project" value="UniProtKB-EC"/>
</dbReference>
<dbReference type="GO" id="GO:0030246">
    <property type="term" value="F:carbohydrate binding"/>
    <property type="evidence" value="ECO:0007669"/>
    <property type="project" value="InterPro"/>
</dbReference>
<dbReference type="GO" id="GO:0005990">
    <property type="term" value="P:lactose catabolic process"/>
    <property type="evidence" value="ECO:0007669"/>
    <property type="project" value="TreeGrafter"/>
</dbReference>
<dbReference type="Gene3D" id="2.70.98.10">
    <property type="match status" value="1"/>
</dbReference>
<dbReference type="Gene3D" id="2.60.120.260">
    <property type="entry name" value="Galactose-binding domain-like"/>
    <property type="match status" value="1"/>
</dbReference>
<dbReference type="Gene3D" id="3.20.20.80">
    <property type="entry name" value="Glycosidases"/>
    <property type="match status" value="1"/>
</dbReference>
<dbReference type="Gene3D" id="2.60.40.10">
    <property type="entry name" value="Immunoglobulins"/>
    <property type="match status" value="1"/>
</dbReference>
<dbReference type="InterPro" id="IPR004199">
    <property type="entry name" value="B-gal_small/dom_5"/>
</dbReference>
<dbReference type="InterPro" id="IPR050347">
    <property type="entry name" value="Bact_Beta-galactosidase"/>
</dbReference>
<dbReference type="InterPro" id="IPR036156">
    <property type="entry name" value="Beta-gal/glucu_dom_sf"/>
</dbReference>
<dbReference type="InterPro" id="IPR011013">
    <property type="entry name" value="Gal_mutarotase_sf_dom"/>
</dbReference>
<dbReference type="InterPro" id="IPR008979">
    <property type="entry name" value="Galactose-bd-like_sf"/>
</dbReference>
<dbReference type="InterPro" id="IPR014718">
    <property type="entry name" value="GH-type_carb-bd"/>
</dbReference>
<dbReference type="InterPro" id="IPR006101">
    <property type="entry name" value="Glyco_hydro_2"/>
</dbReference>
<dbReference type="InterPro" id="IPR023232">
    <property type="entry name" value="Glyco_hydro_2_AS"/>
</dbReference>
<dbReference type="InterPro" id="IPR006103">
    <property type="entry name" value="Glyco_hydro_2_cat"/>
</dbReference>
<dbReference type="InterPro" id="IPR023230">
    <property type="entry name" value="Glyco_hydro_2_CS"/>
</dbReference>
<dbReference type="InterPro" id="IPR006102">
    <property type="entry name" value="Glyco_hydro_2_Ig-like"/>
</dbReference>
<dbReference type="InterPro" id="IPR006104">
    <property type="entry name" value="Glyco_hydro_2_N"/>
</dbReference>
<dbReference type="InterPro" id="IPR017853">
    <property type="entry name" value="Glycoside_hydrolase_SF"/>
</dbReference>
<dbReference type="InterPro" id="IPR013783">
    <property type="entry name" value="Ig-like_fold"/>
</dbReference>
<dbReference type="PANTHER" id="PTHR46323">
    <property type="entry name" value="BETA-GALACTOSIDASE"/>
    <property type="match status" value="1"/>
</dbReference>
<dbReference type="PANTHER" id="PTHR46323:SF2">
    <property type="entry name" value="BETA-GALACTOSIDASE"/>
    <property type="match status" value="1"/>
</dbReference>
<dbReference type="Pfam" id="PF02929">
    <property type="entry name" value="Bgal_small_N"/>
    <property type="match status" value="1"/>
</dbReference>
<dbReference type="Pfam" id="PF00703">
    <property type="entry name" value="Glyco_hydro_2"/>
    <property type="match status" value="1"/>
</dbReference>
<dbReference type="Pfam" id="PF02836">
    <property type="entry name" value="Glyco_hydro_2_C"/>
    <property type="match status" value="1"/>
</dbReference>
<dbReference type="Pfam" id="PF02837">
    <property type="entry name" value="Glyco_hydro_2_N"/>
    <property type="match status" value="1"/>
</dbReference>
<dbReference type="PRINTS" id="PR00132">
    <property type="entry name" value="GLHYDRLASE2"/>
</dbReference>
<dbReference type="SMART" id="SM01038">
    <property type="entry name" value="Bgal_small_N"/>
    <property type="match status" value="1"/>
</dbReference>
<dbReference type="SUPFAM" id="SSF51445">
    <property type="entry name" value="(Trans)glycosidases"/>
    <property type="match status" value="1"/>
</dbReference>
<dbReference type="SUPFAM" id="SSF49303">
    <property type="entry name" value="beta-Galactosidase/glucuronidase domain"/>
    <property type="match status" value="1"/>
</dbReference>
<dbReference type="SUPFAM" id="SSF74650">
    <property type="entry name" value="Galactose mutarotase-like"/>
    <property type="match status" value="1"/>
</dbReference>
<dbReference type="SUPFAM" id="SSF49785">
    <property type="entry name" value="Galactose-binding domain-like"/>
    <property type="match status" value="1"/>
</dbReference>
<dbReference type="PROSITE" id="PS00719">
    <property type="entry name" value="GLYCOSYL_HYDROL_F2_1"/>
    <property type="match status" value="1"/>
</dbReference>
<dbReference type="PROSITE" id="PS00608">
    <property type="entry name" value="GLYCOSYL_HYDROL_F2_2"/>
    <property type="match status" value="1"/>
</dbReference>
<organism>
    <name type="scientific">Staphylococcus xylosus</name>
    <dbReference type="NCBI Taxonomy" id="1288"/>
    <lineage>
        <taxon>Bacteria</taxon>
        <taxon>Bacillati</taxon>
        <taxon>Bacillota</taxon>
        <taxon>Bacilli</taxon>
        <taxon>Bacillales</taxon>
        <taxon>Staphylococcaceae</taxon>
        <taxon>Staphylococcus</taxon>
    </lineage>
</organism>